<accession>Q3UHJ0</accession>
<accession>B2RUJ0</accession>
<accession>Q3TY53</accession>
<accession>Q6ZPZ6</accession>
<accession>Q80XP6</accession>
<gene>
    <name type="primary">Aak1</name>
    <name type="synonym">Kiaa1048</name>
</gene>
<keyword id="KW-0002">3D-structure</keyword>
<keyword id="KW-0007">Acetylation</keyword>
<keyword id="KW-0025">Alternative splicing</keyword>
<keyword id="KW-0067">ATP-binding</keyword>
<keyword id="KW-1003">Cell membrane</keyword>
<keyword id="KW-0966">Cell projection</keyword>
<keyword id="KW-0168">Coated pit</keyword>
<keyword id="KW-0254">Endocytosis</keyword>
<keyword id="KW-0418">Kinase</keyword>
<keyword id="KW-0472">Membrane</keyword>
<keyword id="KW-0488">Methylation</keyword>
<keyword id="KW-0547">Nucleotide-binding</keyword>
<keyword id="KW-0597">Phosphoprotein</keyword>
<keyword id="KW-1185">Reference proteome</keyword>
<keyword id="KW-0723">Serine/threonine-protein kinase</keyword>
<keyword id="KW-0770">Synapse</keyword>
<keyword id="KW-0808">Transferase</keyword>
<evidence type="ECO:0000250" key="1">
    <source>
        <dbReference type="UniProtKB" id="F1MH24"/>
    </source>
</evidence>
<evidence type="ECO:0000250" key="2">
    <source>
        <dbReference type="UniProtKB" id="P0C1X8"/>
    </source>
</evidence>
<evidence type="ECO:0000250" key="3">
    <source>
        <dbReference type="UniProtKB" id="Q2M2I8"/>
    </source>
</evidence>
<evidence type="ECO:0000255" key="4">
    <source>
        <dbReference type="PROSITE-ProRule" id="PRU00159"/>
    </source>
</evidence>
<evidence type="ECO:0000255" key="5">
    <source>
        <dbReference type="PROSITE-ProRule" id="PRU10027"/>
    </source>
</evidence>
<evidence type="ECO:0000256" key="6">
    <source>
        <dbReference type="SAM" id="MobiDB-lite"/>
    </source>
</evidence>
<evidence type="ECO:0000269" key="7">
    <source>
    </source>
</evidence>
<evidence type="ECO:0000303" key="8">
    <source>
    </source>
</evidence>
<evidence type="ECO:0000305" key="9"/>
<evidence type="ECO:0007744" key="10">
    <source>
    </source>
</evidence>
<evidence type="ECO:0007744" key="11">
    <source>
    </source>
</evidence>
<evidence type="ECO:0007744" key="12">
    <source>
    </source>
</evidence>
<evidence type="ECO:0007744" key="13">
    <source>
    </source>
</evidence>
<evidence type="ECO:0007744" key="14">
    <source>
    </source>
</evidence>
<evidence type="ECO:0007829" key="15">
    <source>
        <dbReference type="PDB" id="7LVH"/>
    </source>
</evidence>
<evidence type="ECO:0007829" key="16">
    <source>
        <dbReference type="PDB" id="7RJ7"/>
    </source>
</evidence>
<evidence type="ECO:0007829" key="17">
    <source>
        <dbReference type="PDB" id="7RJ8"/>
    </source>
</evidence>
<reference key="1">
    <citation type="journal article" date="2005" name="Science">
        <title>The transcriptional landscape of the mammalian genome.</title>
        <authorList>
            <person name="Carninci P."/>
            <person name="Kasukawa T."/>
            <person name="Katayama S."/>
            <person name="Gough J."/>
            <person name="Frith M.C."/>
            <person name="Maeda N."/>
            <person name="Oyama R."/>
            <person name="Ravasi T."/>
            <person name="Lenhard B."/>
            <person name="Wells C."/>
            <person name="Kodzius R."/>
            <person name="Shimokawa K."/>
            <person name="Bajic V.B."/>
            <person name="Brenner S.E."/>
            <person name="Batalov S."/>
            <person name="Forrest A.R."/>
            <person name="Zavolan M."/>
            <person name="Davis M.J."/>
            <person name="Wilming L.G."/>
            <person name="Aidinis V."/>
            <person name="Allen J.E."/>
            <person name="Ambesi-Impiombato A."/>
            <person name="Apweiler R."/>
            <person name="Aturaliya R.N."/>
            <person name="Bailey T.L."/>
            <person name="Bansal M."/>
            <person name="Baxter L."/>
            <person name="Beisel K.W."/>
            <person name="Bersano T."/>
            <person name="Bono H."/>
            <person name="Chalk A.M."/>
            <person name="Chiu K.P."/>
            <person name="Choudhary V."/>
            <person name="Christoffels A."/>
            <person name="Clutterbuck D.R."/>
            <person name="Crowe M.L."/>
            <person name="Dalla E."/>
            <person name="Dalrymple B.P."/>
            <person name="de Bono B."/>
            <person name="Della Gatta G."/>
            <person name="di Bernardo D."/>
            <person name="Down T."/>
            <person name="Engstrom P."/>
            <person name="Fagiolini M."/>
            <person name="Faulkner G."/>
            <person name="Fletcher C.F."/>
            <person name="Fukushima T."/>
            <person name="Furuno M."/>
            <person name="Futaki S."/>
            <person name="Gariboldi M."/>
            <person name="Georgii-Hemming P."/>
            <person name="Gingeras T.R."/>
            <person name="Gojobori T."/>
            <person name="Green R.E."/>
            <person name="Gustincich S."/>
            <person name="Harbers M."/>
            <person name="Hayashi Y."/>
            <person name="Hensch T.K."/>
            <person name="Hirokawa N."/>
            <person name="Hill D."/>
            <person name="Huminiecki L."/>
            <person name="Iacono M."/>
            <person name="Ikeo K."/>
            <person name="Iwama A."/>
            <person name="Ishikawa T."/>
            <person name="Jakt M."/>
            <person name="Kanapin A."/>
            <person name="Katoh M."/>
            <person name="Kawasawa Y."/>
            <person name="Kelso J."/>
            <person name="Kitamura H."/>
            <person name="Kitano H."/>
            <person name="Kollias G."/>
            <person name="Krishnan S.P."/>
            <person name="Kruger A."/>
            <person name="Kummerfeld S.K."/>
            <person name="Kurochkin I.V."/>
            <person name="Lareau L.F."/>
            <person name="Lazarevic D."/>
            <person name="Lipovich L."/>
            <person name="Liu J."/>
            <person name="Liuni S."/>
            <person name="McWilliam S."/>
            <person name="Madan Babu M."/>
            <person name="Madera M."/>
            <person name="Marchionni L."/>
            <person name="Matsuda H."/>
            <person name="Matsuzawa S."/>
            <person name="Miki H."/>
            <person name="Mignone F."/>
            <person name="Miyake S."/>
            <person name="Morris K."/>
            <person name="Mottagui-Tabar S."/>
            <person name="Mulder N."/>
            <person name="Nakano N."/>
            <person name="Nakauchi H."/>
            <person name="Ng P."/>
            <person name="Nilsson R."/>
            <person name="Nishiguchi S."/>
            <person name="Nishikawa S."/>
            <person name="Nori F."/>
            <person name="Ohara O."/>
            <person name="Okazaki Y."/>
            <person name="Orlando V."/>
            <person name="Pang K.C."/>
            <person name="Pavan W.J."/>
            <person name="Pavesi G."/>
            <person name="Pesole G."/>
            <person name="Petrovsky N."/>
            <person name="Piazza S."/>
            <person name="Reed J."/>
            <person name="Reid J.F."/>
            <person name="Ring B.Z."/>
            <person name="Ringwald M."/>
            <person name="Rost B."/>
            <person name="Ruan Y."/>
            <person name="Salzberg S.L."/>
            <person name="Sandelin A."/>
            <person name="Schneider C."/>
            <person name="Schoenbach C."/>
            <person name="Sekiguchi K."/>
            <person name="Semple C.A."/>
            <person name="Seno S."/>
            <person name="Sessa L."/>
            <person name="Sheng Y."/>
            <person name="Shibata Y."/>
            <person name="Shimada H."/>
            <person name="Shimada K."/>
            <person name="Silva D."/>
            <person name="Sinclair B."/>
            <person name="Sperling S."/>
            <person name="Stupka E."/>
            <person name="Sugiura K."/>
            <person name="Sultana R."/>
            <person name="Takenaka Y."/>
            <person name="Taki K."/>
            <person name="Tammoja K."/>
            <person name="Tan S.L."/>
            <person name="Tang S."/>
            <person name="Taylor M.S."/>
            <person name="Tegner J."/>
            <person name="Teichmann S.A."/>
            <person name="Ueda H.R."/>
            <person name="van Nimwegen E."/>
            <person name="Verardo R."/>
            <person name="Wei C.L."/>
            <person name="Yagi K."/>
            <person name="Yamanishi H."/>
            <person name="Zabarovsky E."/>
            <person name="Zhu S."/>
            <person name="Zimmer A."/>
            <person name="Hide W."/>
            <person name="Bult C."/>
            <person name="Grimmond S.M."/>
            <person name="Teasdale R.D."/>
            <person name="Liu E.T."/>
            <person name="Brusic V."/>
            <person name="Quackenbush J."/>
            <person name="Wahlestedt C."/>
            <person name="Mattick J.S."/>
            <person name="Hume D.A."/>
            <person name="Kai C."/>
            <person name="Sasaki D."/>
            <person name="Tomaru Y."/>
            <person name="Fukuda S."/>
            <person name="Kanamori-Katayama M."/>
            <person name="Suzuki M."/>
            <person name="Aoki J."/>
            <person name="Arakawa T."/>
            <person name="Iida J."/>
            <person name="Imamura K."/>
            <person name="Itoh M."/>
            <person name="Kato T."/>
            <person name="Kawaji H."/>
            <person name="Kawagashira N."/>
            <person name="Kawashima T."/>
            <person name="Kojima M."/>
            <person name="Kondo S."/>
            <person name="Konno H."/>
            <person name="Nakano K."/>
            <person name="Ninomiya N."/>
            <person name="Nishio T."/>
            <person name="Okada M."/>
            <person name="Plessy C."/>
            <person name="Shibata K."/>
            <person name="Shiraki T."/>
            <person name="Suzuki S."/>
            <person name="Tagami M."/>
            <person name="Waki K."/>
            <person name="Watahiki A."/>
            <person name="Okamura-Oho Y."/>
            <person name="Suzuki H."/>
            <person name="Kawai J."/>
            <person name="Hayashizaki Y."/>
        </authorList>
    </citation>
    <scope>NUCLEOTIDE SEQUENCE [LARGE SCALE MRNA] (ISOFORM 1)</scope>
    <source>
        <strain>C57BL/6J</strain>
        <tissue>Visual cortex</tissue>
    </source>
</reference>
<reference key="2">
    <citation type="journal article" date="2004" name="Genome Res.">
        <title>The status, quality, and expansion of the NIH full-length cDNA project: the Mammalian Gene Collection (MGC).</title>
        <authorList>
            <consortium name="The MGC Project Team"/>
        </authorList>
    </citation>
    <scope>NUCLEOTIDE SEQUENCE [LARGE SCALE MRNA] (ISOFORM 1)</scope>
    <scope>NUCLEOTIDE SEQUENCE [LARGE SCALE MRNA] OF 473-959 (ISOFORM 2)</scope>
    <source>
        <strain>C57BL/6J</strain>
        <tissue>Brain</tissue>
    </source>
</reference>
<reference key="3">
    <citation type="journal article" date="2003" name="DNA Res.">
        <title>Prediction of the coding sequences of mouse homologues of KIAA gene: III. The complete nucleotide sequences of 500 mouse KIAA-homologous cDNAs identified by screening of terminal sequences of cDNA clones randomly sampled from size-fractionated libraries.</title>
        <authorList>
            <person name="Okazaki N."/>
            <person name="Kikuno R."/>
            <person name="Ohara R."/>
            <person name="Inamoto S."/>
            <person name="Koseki H."/>
            <person name="Hiraoka S."/>
            <person name="Saga Y."/>
            <person name="Nagase T."/>
            <person name="Ohara O."/>
            <person name="Koga H."/>
        </authorList>
    </citation>
    <scope>NUCLEOTIDE SEQUENCE [LARGE SCALE MRNA] OF 417-959 (ISOFORM 1)</scope>
    <source>
        <tissue>Brain</tissue>
    </source>
</reference>
<reference key="4">
    <citation type="journal article" date="2006" name="Mol. Cell. Proteomics">
        <title>Comprehensive identification of phosphorylation sites in postsynaptic density preparations.</title>
        <authorList>
            <person name="Trinidad J.C."/>
            <person name="Specht C.G."/>
            <person name="Thalhammer A."/>
            <person name="Schoepfer R."/>
            <person name="Burlingame A.L."/>
        </authorList>
    </citation>
    <scope>IDENTIFICATION BY MASS SPECTROMETRY [LARGE SCALE ANALYSIS]</scope>
    <source>
        <tissue>Brain</tissue>
    </source>
</reference>
<reference key="5">
    <citation type="journal article" date="2007" name="Proc. Natl. Acad. Sci. U.S.A.">
        <title>Large-scale phosphorylation analysis of mouse liver.</title>
        <authorList>
            <person name="Villen J."/>
            <person name="Beausoleil S.A."/>
            <person name="Gerber S.A."/>
            <person name="Gygi S.P."/>
        </authorList>
    </citation>
    <scope>PHOSPHORYLATION [LARGE SCALE ANALYSIS] AT SER-635</scope>
    <scope>IDENTIFICATION BY MASS SPECTROMETRY [LARGE SCALE ANALYSIS]</scope>
    <source>
        <tissue>Liver</tissue>
    </source>
</reference>
<reference key="6">
    <citation type="journal article" date="2009" name="Immunity">
        <title>The phagosomal proteome in interferon-gamma-activated macrophages.</title>
        <authorList>
            <person name="Trost M."/>
            <person name="English L."/>
            <person name="Lemieux S."/>
            <person name="Courcelles M."/>
            <person name="Desjardins M."/>
            <person name="Thibault P."/>
        </authorList>
    </citation>
    <scope>PHOSPHORYLATION [LARGE SCALE ANALYSIS] AT SER-635</scope>
    <scope>IDENTIFICATION BY MASS SPECTROMETRY [LARGE SCALE ANALYSIS]</scope>
</reference>
<reference key="7">
    <citation type="journal article" date="2009" name="Mol. Cell. Proteomics">
        <title>Large scale localization of protein phosphorylation by use of electron capture dissociation mass spectrometry.</title>
        <authorList>
            <person name="Sweet S.M."/>
            <person name="Bailey C.M."/>
            <person name="Cunningham D.L."/>
            <person name="Heath J.K."/>
            <person name="Cooper H.J."/>
        </authorList>
    </citation>
    <scope>PHOSPHORYLATION [LARGE SCALE ANALYSIS] AT THR-604; THR-618 AND SER-622</scope>
    <scope>IDENTIFICATION BY MASS SPECTROMETRY [LARGE SCALE ANALYSIS]</scope>
    <source>
        <tissue>Embryonic fibroblast</tissue>
    </source>
</reference>
<reference key="8">
    <citation type="journal article" date="2010" name="Cell">
        <title>A tissue-specific atlas of mouse protein phosphorylation and expression.</title>
        <authorList>
            <person name="Huttlin E.L."/>
            <person name="Jedrychowski M.P."/>
            <person name="Elias J.E."/>
            <person name="Goswami T."/>
            <person name="Rad R."/>
            <person name="Beausoleil S.A."/>
            <person name="Villen J."/>
            <person name="Haas W."/>
            <person name="Sowa M.E."/>
            <person name="Gygi S.P."/>
        </authorList>
    </citation>
    <scope>PHOSPHORYLATION [LARGE SCALE ANALYSIS] AT THR-389; THR-604; THR-618; SER-635; SER-844; SER-935 AND SER-936</scope>
    <scope>IDENTIFICATION BY MASS SPECTROMETRY [LARGE SCALE ANALYSIS]</scope>
    <source>
        <tissue>Brain</tissue>
        <tissue>Brown adipose tissue</tissue>
        <tissue>Heart</tissue>
        <tissue>Kidney</tissue>
        <tissue>Liver</tissue>
        <tissue>Lung</tissue>
        <tissue>Pancreas</tissue>
        <tissue>Spleen</tissue>
        <tissue>Testis</tissue>
    </source>
</reference>
<reference key="9">
    <citation type="journal article" date="2011" name="J. Biol. Chem.">
        <title>The adaptor-associated kinase 1, AAK1, is a positive regulator of the Notch pathway.</title>
        <authorList>
            <person name="Gupta-Rossi N."/>
            <person name="Ortica S."/>
            <person name="Meas-Yedid V."/>
            <person name="Heuss S."/>
            <person name="Moretti J."/>
            <person name="Olivo-Marin J.C."/>
            <person name="Israel A."/>
        </authorList>
    </citation>
    <scope>INTERACTION WITH NOTCH1</scope>
</reference>
<reference key="10">
    <citation type="journal article" date="2014" name="Mol. Cell. Proteomics">
        <title>Immunoaffinity enrichment and mass spectrometry analysis of protein methylation.</title>
        <authorList>
            <person name="Guo A."/>
            <person name="Gu H."/>
            <person name="Zhou J."/>
            <person name="Mulhern D."/>
            <person name="Wang Y."/>
            <person name="Lee K.A."/>
            <person name="Yang V."/>
            <person name="Aguiar M."/>
            <person name="Kornhauser J."/>
            <person name="Jia X."/>
            <person name="Ren J."/>
            <person name="Beausoleil S.A."/>
            <person name="Silva J.C."/>
            <person name="Vemulapalli V."/>
            <person name="Bedford M.T."/>
            <person name="Comb M.J."/>
        </authorList>
    </citation>
    <scope>METHYLATION [LARGE SCALE ANALYSIS] AT ARG-391</scope>
    <scope>IDENTIFICATION BY MASS SPECTROMETRY [LARGE SCALE ANALYSIS]</scope>
    <source>
        <tissue>Brain</tissue>
    </source>
</reference>
<protein>
    <recommendedName>
        <fullName>AP2-associated protein kinase 1</fullName>
        <ecNumber evidence="3">2.7.11.1</ecNumber>
    </recommendedName>
    <alternativeName>
        <fullName>Adaptor-associated kinase 1</fullName>
    </alternativeName>
</protein>
<organism>
    <name type="scientific">Mus musculus</name>
    <name type="common">Mouse</name>
    <dbReference type="NCBI Taxonomy" id="10090"/>
    <lineage>
        <taxon>Eukaryota</taxon>
        <taxon>Metazoa</taxon>
        <taxon>Chordata</taxon>
        <taxon>Craniata</taxon>
        <taxon>Vertebrata</taxon>
        <taxon>Euteleostomi</taxon>
        <taxon>Mammalia</taxon>
        <taxon>Eutheria</taxon>
        <taxon>Euarchontoglires</taxon>
        <taxon>Glires</taxon>
        <taxon>Rodentia</taxon>
        <taxon>Myomorpha</taxon>
        <taxon>Muroidea</taxon>
        <taxon>Muridae</taxon>
        <taxon>Murinae</taxon>
        <taxon>Mus</taxon>
        <taxon>Mus</taxon>
    </lineage>
</organism>
<proteinExistence type="evidence at protein level"/>
<feature type="chain" id="PRO_0000250579" description="AP2-associated protein kinase 1">
    <location>
        <begin position="1"/>
        <end position="959"/>
    </location>
</feature>
<feature type="domain" description="Protein kinase" evidence="4">
    <location>
        <begin position="46"/>
        <end position="315"/>
    </location>
</feature>
<feature type="region of interest" description="Disordered" evidence="6">
    <location>
        <begin position="1"/>
        <end position="27"/>
    </location>
</feature>
<feature type="region of interest" description="Disordered" evidence="6">
    <location>
        <begin position="340"/>
        <end position="385"/>
    </location>
</feature>
<feature type="region of interest" description="Disordered" evidence="6">
    <location>
        <begin position="398"/>
        <end position="514"/>
    </location>
</feature>
<feature type="region of interest" description="Disordered" evidence="6">
    <location>
        <begin position="578"/>
        <end position="630"/>
    </location>
</feature>
<feature type="region of interest" description="Disordered" evidence="6">
    <location>
        <begin position="662"/>
        <end position="699"/>
    </location>
</feature>
<feature type="region of interest" description="Disordered" evidence="6">
    <location>
        <begin position="727"/>
        <end position="763"/>
    </location>
</feature>
<feature type="region of interest" description="Clathrin-binding domain (CBD)" evidence="3">
    <location>
        <begin position="821"/>
        <end position="958"/>
    </location>
</feature>
<feature type="region of interest" description="Disordered" evidence="6">
    <location>
        <begin position="837"/>
        <end position="857"/>
    </location>
</feature>
<feature type="region of interest" description="Disordered" evidence="6">
    <location>
        <begin position="923"/>
        <end position="943"/>
    </location>
</feature>
<feature type="compositionally biased region" description="Basic and acidic residues" evidence="6">
    <location>
        <begin position="1"/>
        <end position="11"/>
    </location>
</feature>
<feature type="compositionally biased region" description="Gly residues" evidence="6">
    <location>
        <begin position="14"/>
        <end position="27"/>
    </location>
</feature>
<feature type="compositionally biased region" description="Polar residues" evidence="6">
    <location>
        <begin position="404"/>
        <end position="419"/>
    </location>
</feature>
<feature type="compositionally biased region" description="Low complexity" evidence="6">
    <location>
        <begin position="420"/>
        <end position="435"/>
    </location>
</feature>
<feature type="compositionally biased region" description="Low complexity" evidence="6">
    <location>
        <begin position="444"/>
        <end position="481"/>
    </location>
</feature>
<feature type="compositionally biased region" description="Low complexity" evidence="6">
    <location>
        <begin position="494"/>
        <end position="510"/>
    </location>
</feature>
<feature type="compositionally biased region" description="Low complexity" evidence="6">
    <location>
        <begin position="578"/>
        <end position="603"/>
    </location>
</feature>
<feature type="compositionally biased region" description="Polar residues" evidence="6">
    <location>
        <begin position="609"/>
        <end position="625"/>
    </location>
</feature>
<feature type="compositionally biased region" description="Polar residues" evidence="6">
    <location>
        <begin position="670"/>
        <end position="694"/>
    </location>
</feature>
<feature type="compositionally biased region" description="Polar residues" evidence="6">
    <location>
        <begin position="738"/>
        <end position="752"/>
    </location>
</feature>
<feature type="compositionally biased region" description="Polar residues" evidence="6">
    <location>
        <begin position="842"/>
        <end position="857"/>
    </location>
</feature>
<feature type="compositionally biased region" description="Low complexity" evidence="6">
    <location>
        <begin position="929"/>
        <end position="942"/>
    </location>
</feature>
<feature type="active site" description="Proton acceptor" evidence="4 5">
    <location>
        <position position="176"/>
    </location>
</feature>
<feature type="binding site" evidence="4">
    <location>
        <begin position="52"/>
        <end position="60"/>
    </location>
    <ligand>
        <name>ATP</name>
        <dbReference type="ChEBI" id="CHEBI:30616"/>
    </ligand>
</feature>
<feature type="binding site" evidence="4">
    <location>
        <position position="74"/>
    </location>
    <ligand>
        <name>ATP</name>
        <dbReference type="ChEBI" id="CHEBI:30616"/>
    </ligand>
</feature>
<feature type="modified residue" description="N-acetylmethionine" evidence="3">
    <location>
        <position position="1"/>
    </location>
</feature>
<feature type="modified residue" description="Phosphoserine" evidence="3">
    <location>
        <position position="14"/>
    </location>
</feature>
<feature type="modified residue" description="Phosphotyrosine" evidence="3">
    <location>
        <position position="234"/>
    </location>
</feature>
<feature type="modified residue" description="Phosphoserine" evidence="3">
    <location>
        <position position="235"/>
    </location>
</feature>
<feature type="modified residue" description="Phosphothreonine" evidence="3">
    <location>
        <position position="354"/>
    </location>
</feature>
<feature type="modified residue" description="Phosphothreonine" evidence="13">
    <location>
        <position position="389"/>
    </location>
</feature>
<feature type="modified residue" description="Omega-N-methylarginine" evidence="14">
    <location>
        <position position="391"/>
    </location>
</feature>
<feature type="modified residue" description="Phosphothreonine" evidence="3">
    <location>
        <position position="441"/>
    </location>
</feature>
<feature type="modified residue" description="Phosphothreonine" evidence="11 13">
    <location>
        <position position="604"/>
    </location>
</feature>
<feature type="modified residue" description="Phosphoserine" evidence="2">
    <location>
        <position position="616"/>
    </location>
</feature>
<feature type="modified residue" description="Phosphothreonine" evidence="11 13">
    <location>
        <position position="618"/>
    </location>
</feature>
<feature type="modified residue" description="Phosphoserine" evidence="3">
    <location>
        <position position="621"/>
    </location>
</feature>
<feature type="modified residue" description="Phosphoserine" evidence="11">
    <location>
        <position position="622"/>
    </location>
</feature>
<feature type="modified residue" description="Phosphoserine" evidence="10 12 13">
    <location>
        <position position="635"/>
    </location>
</feature>
<feature type="modified residue" description="Phosphoserine" evidence="3">
    <location>
        <position position="648"/>
    </location>
</feature>
<feature type="modified residue" description="Phosphothreonine" evidence="3">
    <location>
        <position position="651"/>
    </location>
</feature>
<feature type="modified residue" description="Phosphoserine" evidence="3">
    <location>
        <position position="729"/>
    </location>
</feature>
<feature type="modified residue" description="Phosphoserine" evidence="13">
    <location>
        <position position="844"/>
    </location>
</feature>
<feature type="modified residue" description="Phosphoserine" evidence="13">
    <location>
        <position position="935"/>
    </location>
</feature>
<feature type="modified residue" description="Phosphoserine" evidence="13">
    <location>
        <position position="936"/>
    </location>
</feature>
<feature type="splice variant" id="VSP_020670" description="In isoform 2." evidence="8">
    <location>
        <begin position="509"/>
        <end position="589"/>
    </location>
</feature>
<feature type="sequence conflict" description="In Ref. 1; BAE27867." evidence="9" ref="1">
    <original>N</original>
    <variation>K</variation>
    <location>
        <position position="79"/>
    </location>
</feature>
<feature type="sequence conflict" description="In Ref. 3; BAC98082." evidence="9" ref="3">
    <original>N</original>
    <variation>S</variation>
    <location>
        <position position="686"/>
    </location>
</feature>
<feature type="sequence conflict" description="In Ref. 2; AAI41177." evidence="9" ref="2">
    <original>L</original>
    <variation>V</variation>
    <location>
        <position position="733"/>
    </location>
</feature>
<feature type="helix" evidence="16">
    <location>
        <begin position="31"/>
        <end position="34"/>
    </location>
</feature>
<feature type="strand" evidence="16">
    <location>
        <begin position="38"/>
        <end position="41"/>
    </location>
</feature>
<feature type="strand" evidence="16">
    <location>
        <begin position="44"/>
        <end position="55"/>
    </location>
</feature>
<feature type="strand" evidence="16">
    <location>
        <begin position="58"/>
        <end position="65"/>
    </location>
</feature>
<feature type="strand" evidence="16">
    <location>
        <begin position="70"/>
        <end position="78"/>
    </location>
</feature>
<feature type="helix" evidence="16">
    <location>
        <begin position="81"/>
        <end position="97"/>
    </location>
</feature>
<feature type="strand" evidence="17">
    <location>
        <begin position="101"/>
        <end position="103"/>
    </location>
</feature>
<feature type="strand" evidence="16">
    <location>
        <begin position="106"/>
        <end position="118"/>
    </location>
</feature>
<feature type="strand" evidence="16">
    <location>
        <begin position="120"/>
        <end position="127"/>
    </location>
</feature>
<feature type="strand" evidence="15">
    <location>
        <begin position="130"/>
        <end position="133"/>
    </location>
</feature>
<feature type="helix" evidence="16">
    <location>
        <begin position="134"/>
        <end position="139"/>
    </location>
</feature>
<feature type="turn" evidence="16">
    <location>
        <begin position="140"/>
        <end position="144"/>
    </location>
</feature>
<feature type="helix" evidence="16">
    <location>
        <begin position="148"/>
        <end position="166"/>
    </location>
</feature>
<feature type="strand" evidence="16">
    <location>
        <begin position="168"/>
        <end position="170"/>
    </location>
</feature>
<feature type="helix" evidence="16">
    <location>
        <begin position="179"/>
        <end position="181"/>
    </location>
</feature>
<feature type="strand" evidence="16">
    <location>
        <begin position="182"/>
        <end position="184"/>
    </location>
</feature>
<feature type="strand" evidence="16">
    <location>
        <begin position="190"/>
        <end position="192"/>
    </location>
</feature>
<feature type="helix" evidence="16">
    <location>
        <begin position="205"/>
        <end position="207"/>
    </location>
</feature>
<feature type="helix" evidence="16">
    <location>
        <begin position="210"/>
        <end position="220"/>
    </location>
</feature>
<feature type="helix" evidence="16">
    <location>
        <begin position="223"/>
        <end position="225"/>
    </location>
</feature>
<feature type="helix" evidence="16">
    <location>
        <begin position="228"/>
        <end position="231"/>
    </location>
</feature>
<feature type="helix" evidence="16">
    <location>
        <begin position="242"/>
        <end position="257"/>
    </location>
</feature>
<feature type="turn" evidence="16">
    <location>
        <begin position="261"/>
        <end position="264"/>
    </location>
</feature>
<feature type="helix" evidence="16">
    <location>
        <begin position="266"/>
        <end position="271"/>
    </location>
</feature>
<feature type="helix" evidence="16">
    <location>
        <begin position="284"/>
        <end position="293"/>
    </location>
</feature>
<feature type="turn" evidence="16">
    <location>
        <begin position="298"/>
        <end position="300"/>
    </location>
</feature>
<feature type="helix" evidence="16">
    <location>
        <begin position="304"/>
        <end position="315"/>
    </location>
</feature>
<name>AAK1_MOUSE</name>
<sequence length="959" mass="103346">MKKFFDSRREQGSSGLGSGSSGGGGSSSGLGSGYIGRVFGIGRQQVTVDEVLAEGGFALVFLVRTSNGVKCALKRMFVNNEHDLQVCKREIQIMRDLSGHKNIVGYIDSSINNVSSGDVWEVLILMDFCRGGQVVNLMNQRLQTGFTENEVLQIFCDTCEAVARLHQCKTPIIHRDLKVENILLHDRGHYVLCDFGSATNKFQNPQAEGVNAVEDEIKKYTTLSYRAPEMVNLYSGKIITTKADIWALGCLLYKLCYFTLPFGESQVAICDGSFTIPDNSRYSQDMHCLIRYMLEPDPDKRPDIYQVSYFSFKLLKKECPVPNVQNSPIPAKLPEPVKASEAAVKKTQPKARLTDPIPTTETSIAPRQRPKAGQTQPNPGILPIQPALTPRKRATVQPLPQAAGPSNQPGLLPSVSQPKAQATPSQPLQSSQPKQPQAPPTPQQTPATQTQGLPTQAQATPQHQQQHLLKQQQQQQQQPQQPTAPPQPAGTFYQQQQQQQQQQAQTQQFQAVHPAAQQPVTAQFPVGSQGGAQQQLMQNFYHQQQQQQQQQQQLMAQQAALQQKTAVVVPQSQAQPATAPQAAAAQEPGQIQAPVRQQPKVQTTPPPTIQGQKVGSLTPPSSPKTQRAGHRRILSDVTHSAVFGVPASKSTQLLQAAAAEASLNKSKSATTTPSGSPRTSQQNVSNASEGSTWNPFDDDNFSKLTAEELLNKDFAKLGEGKLPEKLGGSAESLIPGFQPTQGDAFTTPSFSAGTAEKRKGGQAVDSGIPLLSVSDPFIPLQVPDAPEKLIEGLKSPDTSLLLPDLLPMTDPFGSTSDAVIDKADVAVESLIPGLEPPVAQRLPSQTESVTSNRTDSLTGEDSLLDCSLLSNPTAGLLEEFAPIALSAPTHKAAEDSNLISGFGVAEGSEKVAEDEFDPIPVLITKNTQGGHSRNSSGSSESSLPNLARSLLLVDQLIDL</sequence>
<comment type="function">
    <text evidence="3">Regulates clathrin-mediated endocytosis by phosphorylating the AP2M1/mu2 subunit of the adaptor protein complex 2 (AP-2) which ensures high affinity binding of AP-2 to cargo membrane proteins during the initial stages of endocytosis. Preferentially, may phosphorylate substrates on threonine residues. Regulates phosphorylation of other AP-2 subunits as well as AP-2 localization and AP-2-mediated internalization of ligand complexes. Phosphorylates NUMB and regulates its cellular localization, promoting NUMB localization to endosomes. Binds to and stabilizes the activated form of NOTCH1, increases its localization in endosomes and regulates its transcriptional activity.</text>
</comment>
<comment type="catalytic activity">
    <reaction evidence="9">
        <text>L-seryl-[protein] + ATP = O-phospho-L-seryl-[protein] + ADP + H(+)</text>
        <dbReference type="Rhea" id="RHEA:17989"/>
        <dbReference type="Rhea" id="RHEA-COMP:9863"/>
        <dbReference type="Rhea" id="RHEA-COMP:11604"/>
        <dbReference type="ChEBI" id="CHEBI:15378"/>
        <dbReference type="ChEBI" id="CHEBI:29999"/>
        <dbReference type="ChEBI" id="CHEBI:30616"/>
        <dbReference type="ChEBI" id="CHEBI:83421"/>
        <dbReference type="ChEBI" id="CHEBI:456216"/>
        <dbReference type="EC" id="2.7.11.1"/>
    </reaction>
</comment>
<comment type="catalytic activity">
    <reaction evidence="3">
        <text>L-threonyl-[protein] + ATP = O-phospho-L-threonyl-[protein] + ADP + H(+)</text>
        <dbReference type="Rhea" id="RHEA:46608"/>
        <dbReference type="Rhea" id="RHEA-COMP:11060"/>
        <dbReference type="Rhea" id="RHEA-COMP:11605"/>
        <dbReference type="ChEBI" id="CHEBI:15378"/>
        <dbReference type="ChEBI" id="CHEBI:30013"/>
        <dbReference type="ChEBI" id="CHEBI:30616"/>
        <dbReference type="ChEBI" id="CHEBI:61977"/>
        <dbReference type="ChEBI" id="CHEBI:456216"/>
        <dbReference type="EC" id="2.7.11.1"/>
    </reaction>
</comment>
<comment type="activity regulation">
    <text evidence="3">Stimulated by clathrin.</text>
</comment>
<comment type="subunit">
    <text evidence="2 3 7">Interacts (via CBD domain) with clathrin (By similarity). Interacts with AP-2 complex (By similarity). Interacts with NUMB (By similarity). Interacts with alpha-adaptin (By similarity). Interacts with EPS15 isoform 2 (By similarity). Interacts with membrane-bound activated NOTCH1 but not with the inactive full-length form of NOTCH1 (PubMed:21464124). Preferentially interacts with monoubiquitinated activated NOTCH1 compared to the non-ubiquitinated form (PubMed:21464124).</text>
</comment>
<comment type="subcellular location">
    <subcellularLocation>
        <location evidence="1">Cell membrane</location>
        <topology evidence="1">Peripheral membrane protein</topology>
    </subcellularLocation>
    <subcellularLocation>
        <location evidence="2">Membrane</location>
        <location evidence="2">Clathrin-coated pit</location>
    </subcellularLocation>
    <subcellularLocation>
        <location evidence="2">Presynapse</location>
    </subcellularLocation>
    <text evidence="2">Active when found in clathrin-coated pits at the plasma membrane. In neuronal cells, enriched at presynaptic terminals. In non-neuronal cells, enriched at leading edge of migrating cells.</text>
</comment>
<comment type="alternative products">
    <event type="alternative splicing"/>
    <isoform>
        <id>Q3UHJ0-1</id>
        <name>1</name>
        <sequence type="displayed"/>
    </isoform>
    <isoform>
        <id>Q3UHJ0-2</id>
        <name>2</name>
        <sequence type="described" ref="VSP_020670"/>
    </isoform>
</comment>
<comment type="PTM">
    <text evidence="3">Autophosphorylated.</text>
</comment>
<comment type="similarity">
    <text evidence="4">Belongs to the protein kinase superfamily. Ser/Thr protein kinase family.</text>
</comment>
<dbReference type="EC" id="2.7.11.1" evidence="3"/>
<dbReference type="EMBL" id="AK147363">
    <property type="protein sequence ID" value="BAE27867.1"/>
    <property type="molecule type" value="mRNA"/>
</dbReference>
<dbReference type="EMBL" id="AK158879">
    <property type="protein sequence ID" value="BAE34710.1"/>
    <property type="molecule type" value="mRNA"/>
</dbReference>
<dbReference type="EMBL" id="BC043125">
    <property type="protein sequence ID" value="AAH43125.1"/>
    <property type="molecule type" value="mRNA"/>
</dbReference>
<dbReference type="EMBL" id="BC141176">
    <property type="protein sequence ID" value="AAI41177.1"/>
    <property type="molecule type" value="mRNA"/>
</dbReference>
<dbReference type="EMBL" id="AK129272">
    <property type="protein sequence ID" value="BAC98082.1"/>
    <property type="molecule type" value="mRNA"/>
</dbReference>
<dbReference type="CCDS" id="CCDS20317.1">
    <molecule id="Q3UHJ0-2"/>
</dbReference>
<dbReference type="CCDS" id="CCDS39544.1">
    <molecule id="Q3UHJ0-1"/>
</dbReference>
<dbReference type="RefSeq" id="NP_001035195.1">
    <molecule id="Q3UHJ0-1"/>
    <property type="nucleotide sequence ID" value="NM_001040106.3"/>
</dbReference>
<dbReference type="RefSeq" id="NP_808430.2">
    <molecule id="Q3UHJ0-2"/>
    <property type="nucleotide sequence ID" value="NM_177762.6"/>
</dbReference>
<dbReference type="PDB" id="7LVH">
    <property type="method" value="X-ray"/>
    <property type="resolution" value="2.65 A"/>
    <property type="chains" value="A/B=26-330"/>
</dbReference>
<dbReference type="PDB" id="7LVI">
    <property type="method" value="X-ray"/>
    <property type="resolution" value="2.20 A"/>
    <property type="chains" value="A/B=26-330"/>
</dbReference>
<dbReference type="PDB" id="7RJ6">
    <property type="method" value="X-ray"/>
    <property type="resolution" value="2.13 A"/>
    <property type="chains" value="A/B=26-330"/>
</dbReference>
<dbReference type="PDB" id="7RJ7">
    <property type="method" value="X-ray"/>
    <property type="resolution" value="2.12 A"/>
    <property type="chains" value="A/B=26-330"/>
</dbReference>
<dbReference type="PDB" id="7RJ8">
    <property type="method" value="X-ray"/>
    <property type="resolution" value="2.59 A"/>
    <property type="chains" value="A/B=26-330"/>
</dbReference>
<dbReference type="PDBsum" id="7LVH"/>
<dbReference type="PDBsum" id="7LVI"/>
<dbReference type="PDBsum" id="7RJ6"/>
<dbReference type="PDBsum" id="7RJ7"/>
<dbReference type="PDBsum" id="7RJ8"/>
<dbReference type="SMR" id="Q3UHJ0"/>
<dbReference type="BioGRID" id="234710">
    <property type="interactions" value="18"/>
</dbReference>
<dbReference type="FunCoup" id="Q3UHJ0">
    <property type="interactions" value="517"/>
</dbReference>
<dbReference type="IntAct" id="Q3UHJ0">
    <property type="interactions" value="4"/>
</dbReference>
<dbReference type="MINT" id="Q3UHJ0"/>
<dbReference type="STRING" id="10090.ENSMUSP00000086948"/>
<dbReference type="BindingDB" id="Q3UHJ0"/>
<dbReference type="ChEMBL" id="CHEMBL5169154"/>
<dbReference type="GlyGen" id="Q3UHJ0">
    <property type="glycosylation" value="11 sites, 2 N-linked glycans (2 sites), 1 O-linked glycan (7 sites)"/>
</dbReference>
<dbReference type="iPTMnet" id="Q3UHJ0"/>
<dbReference type="MetOSite" id="Q3UHJ0"/>
<dbReference type="PhosphoSitePlus" id="Q3UHJ0"/>
<dbReference type="SwissPalm" id="Q3UHJ0"/>
<dbReference type="jPOST" id="Q3UHJ0"/>
<dbReference type="PaxDb" id="10090-ENSMUSP00000086948"/>
<dbReference type="PeptideAtlas" id="Q3UHJ0"/>
<dbReference type="ProteomicsDB" id="286010">
    <molecule id="Q3UHJ0-1"/>
</dbReference>
<dbReference type="ProteomicsDB" id="286011">
    <molecule id="Q3UHJ0-2"/>
</dbReference>
<dbReference type="Pumba" id="Q3UHJ0"/>
<dbReference type="Antibodypedia" id="7943">
    <property type="antibodies" value="353 antibodies from 38 providers"/>
</dbReference>
<dbReference type="DNASU" id="269774"/>
<dbReference type="Ensembl" id="ENSMUST00000003710.10">
    <molecule id="Q3UHJ0-2"/>
    <property type="protein sequence ID" value="ENSMUSP00000003710.10"/>
    <property type="gene ID" value="ENSMUSG00000057230.15"/>
</dbReference>
<dbReference type="Ensembl" id="ENSMUST00000089519.13">
    <molecule id="Q3UHJ0-1"/>
    <property type="protein sequence ID" value="ENSMUSP00000086948.7"/>
    <property type="gene ID" value="ENSMUSG00000057230.15"/>
</dbReference>
<dbReference type="GeneID" id="269774"/>
<dbReference type="KEGG" id="mmu:269774"/>
<dbReference type="UCSC" id="uc009css.1">
    <molecule id="Q3UHJ0-1"/>
    <property type="organism name" value="mouse"/>
</dbReference>
<dbReference type="UCSC" id="uc009cst.1">
    <molecule id="Q3UHJ0-2"/>
    <property type="organism name" value="mouse"/>
</dbReference>
<dbReference type="AGR" id="MGI:1098687"/>
<dbReference type="CTD" id="22848"/>
<dbReference type="MGI" id="MGI:1098687">
    <property type="gene designation" value="Aak1"/>
</dbReference>
<dbReference type="VEuPathDB" id="HostDB:ENSMUSG00000057230"/>
<dbReference type="eggNOG" id="KOG1989">
    <property type="taxonomic scope" value="Eukaryota"/>
</dbReference>
<dbReference type="GeneTree" id="ENSGT00940000155968"/>
<dbReference type="HOGENOM" id="CLU_000288_109_5_1"/>
<dbReference type="InParanoid" id="Q3UHJ0"/>
<dbReference type="OMA" id="VSQFPVM"/>
<dbReference type="OrthoDB" id="2018507at2759"/>
<dbReference type="PhylomeDB" id="Q3UHJ0"/>
<dbReference type="TreeFam" id="TF317300"/>
<dbReference type="Reactome" id="R-MMU-8856825">
    <property type="pathway name" value="Cargo recognition for clathrin-mediated endocytosis"/>
</dbReference>
<dbReference type="Reactome" id="R-MMU-8856828">
    <property type="pathway name" value="Clathrin-mediated endocytosis"/>
</dbReference>
<dbReference type="BioGRID-ORCS" id="269774">
    <property type="hits" value="2 hits in 79 CRISPR screens"/>
</dbReference>
<dbReference type="CD-CODE" id="CE726F99">
    <property type="entry name" value="Postsynaptic density"/>
</dbReference>
<dbReference type="ChiTaRS" id="Aak1">
    <property type="organism name" value="mouse"/>
</dbReference>
<dbReference type="Proteomes" id="UP000000589">
    <property type="component" value="Chromosome 6"/>
</dbReference>
<dbReference type="RNAct" id="Q3UHJ0">
    <property type="molecule type" value="protein"/>
</dbReference>
<dbReference type="Bgee" id="ENSMUSG00000057230">
    <property type="expression patterns" value="Expressed in vestibular membrane of cochlear duct and 258 other cell types or tissues"/>
</dbReference>
<dbReference type="ExpressionAtlas" id="Q3UHJ0">
    <property type="expression patterns" value="baseline and differential"/>
</dbReference>
<dbReference type="GO" id="GO:0031252">
    <property type="term" value="C:cell leading edge"/>
    <property type="evidence" value="ECO:0000250"/>
    <property type="project" value="UniProtKB"/>
</dbReference>
<dbReference type="GO" id="GO:0005905">
    <property type="term" value="C:clathrin-coated pit"/>
    <property type="evidence" value="ECO:0000250"/>
    <property type="project" value="UniProtKB"/>
</dbReference>
<dbReference type="GO" id="GO:0030136">
    <property type="term" value="C:clathrin-coated vesicle"/>
    <property type="evidence" value="ECO:0000250"/>
    <property type="project" value="UniProtKB"/>
</dbReference>
<dbReference type="GO" id="GO:0005829">
    <property type="term" value="C:cytosol"/>
    <property type="evidence" value="ECO:0007669"/>
    <property type="project" value="Ensembl"/>
</dbReference>
<dbReference type="GO" id="GO:0005886">
    <property type="term" value="C:plasma membrane"/>
    <property type="evidence" value="ECO:0007669"/>
    <property type="project" value="UniProtKB-SubCell"/>
</dbReference>
<dbReference type="GO" id="GO:0043195">
    <property type="term" value="C:terminal bouton"/>
    <property type="evidence" value="ECO:0000250"/>
    <property type="project" value="UniProtKB"/>
</dbReference>
<dbReference type="GO" id="GO:0035612">
    <property type="term" value="F:AP-2 adaptor complex binding"/>
    <property type="evidence" value="ECO:0000250"/>
    <property type="project" value="UniProtKB"/>
</dbReference>
<dbReference type="GO" id="GO:0005524">
    <property type="term" value="F:ATP binding"/>
    <property type="evidence" value="ECO:0007669"/>
    <property type="project" value="UniProtKB-KW"/>
</dbReference>
<dbReference type="GO" id="GO:0005112">
    <property type="term" value="F:Notch binding"/>
    <property type="evidence" value="ECO:0000250"/>
    <property type="project" value="UniProtKB"/>
</dbReference>
<dbReference type="GO" id="GO:0106310">
    <property type="term" value="F:protein serine kinase activity"/>
    <property type="evidence" value="ECO:0007669"/>
    <property type="project" value="RHEA"/>
</dbReference>
<dbReference type="GO" id="GO:0004674">
    <property type="term" value="F:protein serine/threonine kinase activity"/>
    <property type="evidence" value="ECO:0000250"/>
    <property type="project" value="UniProtKB"/>
</dbReference>
<dbReference type="GO" id="GO:0045747">
    <property type="term" value="P:positive regulation of Notch signaling pathway"/>
    <property type="evidence" value="ECO:0000250"/>
    <property type="project" value="UniProtKB"/>
</dbReference>
<dbReference type="GO" id="GO:0140238">
    <property type="term" value="P:presynaptic endocytosis"/>
    <property type="evidence" value="ECO:0000314"/>
    <property type="project" value="SynGO"/>
</dbReference>
<dbReference type="GO" id="GO:0006468">
    <property type="term" value="P:protein phosphorylation"/>
    <property type="evidence" value="ECO:0000250"/>
    <property type="project" value="UniProtKB"/>
</dbReference>
<dbReference type="GO" id="GO:0050821">
    <property type="term" value="P:protein stabilization"/>
    <property type="evidence" value="ECO:0000250"/>
    <property type="project" value="UniProtKB"/>
</dbReference>
<dbReference type="GO" id="GO:2000369">
    <property type="term" value="P:regulation of clathrin-dependent endocytosis"/>
    <property type="evidence" value="ECO:0000250"/>
    <property type="project" value="UniProtKB"/>
</dbReference>
<dbReference type="GO" id="GO:0032880">
    <property type="term" value="P:regulation of protein localization"/>
    <property type="evidence" value="ECO:0000250"/>
    <property type="project" value="UniProtKB"/>
</dbReference>
<dbReference type="CDD" id="cd14037">
    <property type="entry name" value="STKc_NAK_like"/>
    <property type="match status" value="1"/>
</dbReference>
<dbReference type="FunFam" id="1.10.510.10:FF:000072">
    <property type="entry name" value="AP2 associated kinase 1"/>
    <property type="match status" value="1"/>
</dbReference>
<dbReference type="Gene3D" id="1.10.510.10">
    <property type="entry name" value="Transferase(Phosphotransferase) domain 1"/>
    <property type="match status" value="1"/>
</dbReference>
<dbReference type="InterPro" id="IPR051744">
    <property type="entry name" value="AP2_assoc_SerThr_kinase"/>
</dbReference>
<dbReference type="InterPro" id="IPR011009">
    <property type="entry name" value="Kinase-like_dom_sf"/>
</dbReference>
<dbReference type="InterPro" id="IPR000719">
    <property type="entry name" value="Prot_kinase_dom"/>
</dbReference>
<dbReference type="InterPro" id="IPR008271">
    <property type="entry name" value="Ser/Thr_kinase_AS"/>
</dbReference>
<dbReference type="PANTHER" id="PTHR47907:SF3">
    <property type="entry name" value="AP2-ASSOCIATED PROTEIN KINASE 1"/>
    <property type="match status" value="1"/>
</dbReference>
<dbReference type="PANTHER" id="PTHR47907">
    <property type="entry name" value="PROTEIN KINASE DOMAIN-CONTAINING PROTEIN"/>
    <property type="match status" value="1"/>
</dbReference>
<dbReference type="Pfam" id="PF00069">
    <property type="entry name" value="Pkinase"/>
    <property type="match status" value="1"/>
</dbReference>
<dbReference type="SMART" id="SM00220">
    <property type="entry name" value="S_TKc"/>
    <property type="match status" value="1"/>
</dbReference>
<dbReference type="SUPFAM" id="SSF56112">
    <property type="entry name" value="Protein kinase-like (PK-like)"/>
    <property type="match status" value="1"/>
</dbReference>
<dbReference type="PROSITE" id="PS50011">
    <property type="entry name" value="PROTEIN_KINASE_DOM"/>
    <property type="match status" value="1"/>
</dbReference>
<dbReference type="PROSITE" id="PS00108">
    <property type="entry name" value="PROTEIN_KINASE_ST"/>
    <property type="match status" value="1"/>
</dbReference>